<gene>
    <name evidence="1" type="primary">amiF</name>
    <name type="ordered locus">BCAH820_3954</name>
</gene>
<protein>
    <recommendedName>
        <fullName evidence="1">Formamidase</fullName>
        <ecNumber evidence="1">3.5.1.49</ecNumber>
    </recommendedName>
    <alternativeName>
        <fullName evidence="1">Formamide amidohydrolase</fullName>
    </alternativeName>
</protein>
<sequence>MGSSGSMVKPISGFLTALIQYPVPVVESRADIDKQIKQIIKTIHSTKAGYPGLELIVFPEYSTQGLNTKKWTTEEFLCTVPGPETDLFAEACKESEVYGVFSIMERNPDGGEPYNTAIIIDPQGEMILKYRKLNPWVPVEPWKAGDLGLPVCDGPGGSKLAVCICHDGMFPEVAREAAYKGANVLIRISGYSTQVSEQWMLTNRSNAWQNLMYTLSVNLAGYDGVFYYFGEGQVCNFDGTTLVQGHRNPWEIVTAEVYPELADQARLGWGLENNIYNLGSRGYVATPGGVKENPYTFVKDLAEGKYKVPWEDEIKVKDGTIYGYPVKKTIHS</sequence>
<organism>
    <name type="scientific">Bacillus cereus (strain AH820)</name>
    <dbReference type="NCBI Taxonomy" id="405535"/>
    <lineage>
        <taxon>Bacteria</taxon>
        <taxon>Bacillati</taxon>
        <taxon>Bacillota</taxon>
        <taxon>Bacilli</taxon>
        <taxon>Bacillales</taxon>
        <taxon>Bacillaceae</taxon>
        <taxon>Bacillus</taxon>
        <taxon>Bacillus cereus group</taxon>
    </lineage>
</organism>
<name>AMIF_BACC0</name>
<feature type="chain" id="PRO_1000139810" description="Formamidase">
    <location>
        <begin position="1"/>
        <end position="332"/>
    </location>
</feature>
<feature type="domain" description="CN hydrolase" evidence="2">
    <location>
        <begin position="14"/>
        <end position="259"/>
    </location>
</feature>
<feature type="active site" description="Proton acceptor" evidence="1">
    <location>
        <position position="60"/>
    </location>
</feature>
<feature type="active site" description="Proton donor" evidence="1">
    <location>
        <position position="132"/>
    </location>
</feature>
<feature type="active site" description="Nucleophile" evidence="1">
    <location>
        <position position="165"/>
    </location>
</feature>
<dbReference type="EC" id="3.5.1.49" evidence="1"/>
<dbReference type="EMBL" id="CP001283">
    <property type="protein sequence ID" value="ACK89592.1"/>
    <property type="molecule type" value="Genomic_DNA"/>
</dbReference>
<dbReference type="RefSeq" id="WP_000535791.1">
    <property type="nucleotide sequence ID" value="NC_011773.1"/>
</dbReference>
<dbReference type="SMR" id="B7JK27"/>
<dbReference type="KEGG" id="bcu:BCAH820_3954"/>
<dbReference type="HOGENOM" id="CLU_071797_0_0_9"/>
<dbReference type="Proteomes" id="UP000001363">
    <property type="component" value="Chromosome"/>
</dbReference>
<dbReference type="GO" id="GO:0004328">
    <property type="term" value="F:formamidase activity"/>
    <property type="evidence" value="ECO:0007669"/>
    <property type="project" value="UniProtKB-UniRule"/>
</dbReference>
<dbReference type="GO" id="GO:0050126">
    <property type="term" value="F:N-carbamoylputrescine amidase activity"/>
    <property type="evidence" value="ECO:0007669"/>
    <property type="project" value="TreeGrafter"/>
</dbReference>
<dbReference type="GO" id="GO:0033388">
    <property type="term" value="P:putrescine biosynthetic process from arginine"/>
    <property type="evidence" value="ECO:0007669"/>
    <property type="project" value="TreeGrafter"/>
</dbReference>
<dbReference type="CDD" id="cd07565">
    <property type="entry name" value="aliphatic_amidase"/>
    <property type="match status" value="1"/>
</dbReference>
<dbReference type="Gene3D" id="3.60.110.10">
    <property type="entry name" value="Carbon-nitrogen hydrolase"/>
    <property type="match status" value="1"/>
</dbReference>
<dbReference type="HAMAP" id="MF_01243">
    <property type="entry name" value="Formamidase"/>
    <property type="match status" value="1"/>
</dbReference>
<dbReference type="InterPro" id="IPR050345">
    <property type="entry name" value="Aliph_Amidase/BUP"/>
</dbReference>
<dbReference type="InterPro" id="IPR003010">
    <property type="entry name" value="C-N_Hydrolase"/>
</dbReference>
<dbReference type="InterPro" id="IPR036526">
    <property type="entry name" value="C-N_Hydrolase_sf"/>
</dbReference>
<dbReference type="InterPro" id="IPR022843">
    <property type="entry name" value="Formamidase"/>
</dbReference>
<dbReference type="NCBIfam" id="NF009803">
    <property type="entry name" value="PRK13287.1"/>
    <property type="match status" value="1"/>
</dbReference>
<dbReference type="PANTHER" id="PTHR43674:SF15">
    <property type="entry name" value="FORMAMIDASE"/>
    <property type="match status" value="1"/>
</dbReference>
<dbReference type="PANTHER" id="PTHR43674">
    <property type="entry name" value="NITRILASE C965.09-RELATED"/>
    <property type="match status" value="1"/>
</dbReference>
<dbReference type="Pfam" id="PF00795">
    <property type="entry name" value="CN_hydrolase"/>
    <property type="match status" value="1"/>
</dbReference>
<dbReference type="SUPFAM" id="SSF56317">
    <property type="entry name" value="Carbon-nitrogen hydrolase"/>
    <property type="match status" value="1"/>
</dbReference>
<dbReference type="PROSITE" id="PS50263">
    <property type="entry name" value="CN_HYDROLASE"/>
    <property type="match status" value="1"/>
</dbReference>
<comment type="function">
    <text evidence="1">Is an aliphatic amidase with a restricted substrate specificity, as it only hydrolyzes formamide.</text>
</comment>
<comment type="catalytic activity">
    <reaction evidence="1">
        <text>formamide + H2O = formate + NH4(+)</text>
        <dbReference type="Rhea" id="RHEA:21948"/>
        <dbReference type="ChEBI" id="CHEBI:15377"/>
        <dbReference type="ChEBI" id="CHEBI:15740"/>
        <dbReference type="ChEBI" id="CHEBI:16397"/>
        <dbReference type="ChEBI" id="CHEBI:28938"/>
        <dbReference type="EC" id="3.5.1.49"/>
    </reaction>
</comment>
<comment type="similarity">
    <text evidence="1">Belongs to the carbon-nitrogen hydrolase superfamily. Aliphatic amidase family.</text>
</comment>
<keyword id="KW-0378">Hydrolase</keyword>
<reference key="1">
    <citation type="submission" date="2008-10" db="EMBL/GenBank/DDBJ databases">
        <title>Genome sequence of Bacillus cereus AH820.</title>
        <authorList>
            <person name="Dodson R.J."/>
            <person name="Durkin A.S."/>
            <person name="Rosovitz M.J."/>
            <person name="Rasko D.A."/>
            <person name="Hoffmaster A."/>
            <person name="Ravel J."/>
            <person name="Sutton G."/>
        </authorList>
    </citation>
    <scope>NUCLEOTIDE SEQUENCE [LARGE SCALE GENOMIC DNA]</scope>
    <source>
        <strain>AH820</strain>
    </source>
</reference>
<accession>B7JK27</accession>
<evidence type="ECO:0000255" key="1">
    <source>
        <dbReference type="HAMAP-Rule" id="MF_01243"/>
    </source>
</evidence>
<evidence type="ECO:0000255" key="2">
    <source>
        <dbReference type="PROSITE-ProRule" id="PRU00054"/>
    </source>
</evidence>
<proteinExistence type="inferred from homology"/>